<name>RTCA_THEGJ</name>
<proteinExistence type="inferred from homology"/>
<feature type="chain" id="PRO_1000204098" description="RNA 3'-terminal phosphate cyclase">
    <location>
        <begin position="1"/>
        <end position="344"/>
    </location>
</feature>
<feature type="active site" description="Tele-AMP-histidine intermediate" evidence="1">
    <location>
        <position position="308"/>
    </location>
</feature>
<feature type="binding site" evidence="1">
    <location>
        <position position="102"/>
    </location>
    <ligand>
        <name>ATP</name>
        <dbReference type="ChEBI" id="CHEBI:30616"/>
    </ligand>
</feature>
<feature type="binding site" evidence="1">
    <location>
        <begin position="284"/>
        <end position="288"/>
    </location>
    <ligand>
        <name>ATP</name>
        <dbReference type="ChEBI" id="CHEBI:30616"/>
    </ligand>
</feature>
<comment type="function">
    <text evidence="1">Catalyzes the conversion of 3'-phosphate to a 2',3'-cyclic phosphodiester at the end of RNA. The mechanism of action of the enzyme occurs in 3 steps: (A) adenylation of the enzyme by ATP; (B) transfer of adenylate to an RNA-N3'P to produce RNA-N3'PP5'A; (C) and attack of the adjacent 2'-hydroxyl on the 3'-phosphorus in the diester linkage to produce the cyclic end product. The biological role of this enzyme is unknown but it is likely to function in some aspects of cellular RNA processing.</text>
</comment>
<comment type="catalytic activity">
    <reaction evidence="1">
        <text>a 3'-end 3'-phospho-ribonucleotide-RNA + ATP = a 3'-end 2',3'-cyclophospho-ribonucleotide-RNA + AMP + diphosphate</text>
        <dbReference type="Rhea" id="RHEA:23976"/>
        <dbReference type="Rhea" id="RHEA-COMP:10463"/>
        <dbReference type="Rhea" id="RHEA-COMP:10464"/>
        <dbReference type="ChEBI" id="CHEBI:30616"/>
        <dbReference type="ChEBI" id="CHEBI:33019"/>
        <dbReference type="ChEBI" id="CHEBI:83062"/>
        <dbReference type="ChEBI" id="CHEBI:83064"/>
        <dbReference type="ChEBI" id="CHEBI:456215"/>
        <dbReference type="EC" id="6.5.1.4"/>
    </reaction>
</comment>
<comment type="subcellular location">
    <subcellularLocation>
        <location evidence="1">Cytoplasm</location>
    </subcellularLocation>
</comment>
<comment type="similarity">
    <text evidence="1">Belongs to the RNA 3'-terminal cyclase family. Type 1 subfamily.</text>
</comment>
<keyword id="KW-0067">ATP-binding</keyword>
<keyword id="KW-0963">Cytoplasm</keyword>
<keyword id="KW-0436">Ligase</keyword>
<keyword id="KW-0547">Nucleotide-binding</keyword>
<keyword id="KW-1185">Reference proteome</keyword>
<evidence type="ECO:0000255" key="1">
    <source>
        <dbReference type="HAMAP-Rule" id="MF_00200"/>
    </source>
</evidence>
<gene>
    <name evidence="1" type="primary">rtcA</name>
    <name type="ordered locus">TGAM_2020</name>
</gene>
<accession>C5A2A3</accession>
<reference key="1">
    <citation type="journal article" date="2007" name="Genome Biol.">
        <title>Genome analysis and genome-wide proteomics of Thermococcus gammatolerans, the most radioresistant organism known amongst the Archaea.</title>
        <authorList>
            <person name="Zivanovic Y."/>
            <person name="Armengaud J."/>
            <person name="Lagorce A."/>
            <person name="Leplat C."/>
            <person name="Guerin P."/>
            <person name="Dutertre M."/>
            <person name="Anthouard V."/>
            <person name="Forterre P."/>
            <person name="Wincker P."/>
            <person name="Confalonieri F."/>
        </authorList>
    </citation>
    <scope>NUCLEOTIDE SEQUENCE [LARGE SCALE GENOMIC DNA]</scope>
    <source>
        <strain>DSM 15229 / JCM 11827 / EJ3</strain>
    </source>
</reference>
<protein>
    <recommendedName>
        <fullName evidence="1">RNA 3'-terminal phosphate cyclase</fullName>
        <shortName evidence="1">RNA cyclase</shortName>
        <shortName evidence="1">RNA-3'-phosphate cyclase</shortName>
        <ecNumber evidence="1">6.5.1.4</ecNumber>
    </recommendedName>
</protein>
<organism>
    <name type="scientific">Thermococcus gammatolerans (strain DSM 15229 / JCM 11827 / EJ3)</name>
    <dbReference type="NCBI Taxonomy" id="593117"/>
    <lineage>
        <taxon>Archaea</taxon>
        <taxon>Methanobacteriati</taxon>
        <taxon>Methanobacteriota</taxon>
        <taxon>Thermococci</taxon>
        <taxon>Thermococcales</taxon>
        <taxon>Thermococcaceae</taxon>
        <taxon>Thermococcus</taxon>
    </lineage>
</organism>
<dbReference type="EC" id="6.5.1.4" evidence="1"/>
<dbReference type="EMBL" id="CP001398">
    <property type="protein sequence ID" value="ACS34522.1"/>
    <property type="molecule type" value="Genomic_DNA"/>
</dbReference>
<dbReference type="RefSeq" id="WP_015859625.1">
    <property type="nucleotide sequence ID" value="NC_012804.1"/>
</dbReference>
<dbReference type="SMR" id="C5A2A3"/>
<dbReference type="STRING" id="593117.TGAM_2020"/>
<dbReference type="PaxDb" id="593117-TGAM_2020"/>
<dbReference type="GeneID" id="7987077"/>
<dbReference type="KEGG" id="tga:TGAM_2020"/>
<dbReference type="PATRIC" id="fig|593117.10.peg.2030"/>
<dbReference type="eggNOG" id="arCOG04125">
    <property type="taxonomic scope" value="Archaea"/>
</dbReference>
<dbReference type="HOGENOM" id="CLU_027882_0_0_2"/>
<dbReference type="OrthoDB" id="7994at2157"/>
<dbReference type="Proteomes" id="UP000001488">
    <property type="component" value="Chromosome"/>
</dbReference>
<dbReference type="GO" id="GO:0005737">
    <property type="term" value="C:cytoplasm"/>
    <property type="evidence" value="ECO:0007669"/>
    <property type="project" value="UniProtKB-SubCell"/>
</dbReference>
<dbReference type="GO" id="GO:0005524">
    <property type="term" value="F:ATP binding"/>
    <property type="evidence" value="ECO:0007669"/>
    <property type="project" value="UniProtKB-KW"/>
</dbReference>
<dbReference type="GO" id="GO:0003963">
    <property type="term" value="F:RNA-3'-phosphate cyclase activity"/>
    <property type="evidence" value="ECO:0007669"/>
    <property type="project" value="UniProtKB-UniRule"/>
</dbReference>
<dbReference type="GO" id="GO:0006396">
    <property type="term" value="P:RNA processing"/>
    <property type="evidence" value="ECO:0007669"/>
    <property type="project" value="InterPro"/>
</dbReference>
<dbReference type="CDD" id="cd00874">
    <property type="entry name" value="RNA_Cyclase_Class_II"/>
    <property type="match status" value="1"/>
</dbReference>
<dbReference type="FunFam" id="3.30.360.20:FF:000002">
    <property type="entry name" value="RNA terminal phosphate cyclase-like 1"/>
    <property type="match status" value="1"/>
</dbReference>
<dbReference type="Gene3D" id="3.65.10.20">
    <property type="entry name" value="RNA 3'-terminal phosphate cyclase domain"/>
    <property type="match status" value="1"/>
</dbReference>
<dbReference type="Gene3D" id="3.30.360.20">
    <property type="entry name" value="RNA 3'-terminal phosphate cyclase, insert domain"/>
    <property type="match status" value="1"/>
</dbReference>
<dbReference type="HAMAP" id="MF_00200">
    <property type="entry name" value="RTC"/>
    <property type="match status" value="1"/>
</dbReference>
<dbReference type="InterPro" id="IPR013791">
    <property type="entry name" value="RNA3'-term_phos_cycl_insert"/>
</dbReference>
<dbReference type="InterPro" id="IPR023797">
    <property type="entry name" value="RNA3'_phos_cyclase_dom"/>
</dbReference>
<dbReference type="InterPro" id="IPR037136">
    <property type="entry name" value="RNA3'_phos_cyclase_dom_sf"/>
</dbReference>
<dbReference type="InterPro" id="IPR000228">
    <property type="entry name" value="RNA3'_term_phos_cyc"/>
</dbReference>
<dbReference type="InterPro" id="IPR017770">
    <property type="entry name" value="RNA3'_term_phos_cyc_type_1"/>
</dbReference>
<dbReference type="InterPro" id="IPR020719">
    <property type="entry name" value="RNA3'_term_phos_cycl-like_CS"/>
</dbReference>
<dbReference type="InterPro" id="IPR013792">
    <property type="entry name" value="RNA3'P_cycl/enolpyr_Trfase_a/b"/>
</dbReference>
<dbReference type="InterPro" id="IPR036553">
    <property type="entry name" value="RPTC_insert"/>
</dbReference>
<dbReference type="NCBIfam" id="TIGR03399">
    <property type="entry name" value="RNA_3prim_cycl"/>
    <property type="match status" value="1"/>
</dbReference>
<dbReference type="PANTHER" id="PTHR11096">
    <property type="entry name" value="RNA 3' TERMINAL PHOSPHATE CYCLASE"/>
    <property type="match status" value="1"/>
</dbReference>
<dbReference type="PANTHER" id="PTHR11096:SF0">
    <property type="entry name" value="RNA 3'-TERMINAL PHOSPHATE CYCLASE"/>
    <property type="match status" value="1"/>
</dbReference>
<dbReference type="Pfam" id="PF01137">
    <property type="entry name" value="RTC"/>
    <property type="match status" value="1"/>
</dbReference>
<dbReference type="Pfam" id="PF05189">
    <property type="entry name" value="RTC_insert"/>
    <property type="match status" value="1"/>
</dbReference>
<dbReference type="PIRSF" id="PIRSF005378">
    <property type="entry name" value="RNA3'_term_phos_cycl_euk"/>
    <property type="match status" value="1"/>
</dbReference>
<dbReference type="SUPFAM" id="SSF55205">
    <property type="entry name" value="EPT/RTPC-like"/>
    <property type="match status" value="2"/>
</dbReference>
<dbReference type="SUPFAM" id="SSF52913">
    <property type="entry name" value="RNA 3'-terminal phosphate cyclase, RPTC, insert domain"/>
    <property type="match status" value="1"/>
</dbReference>
<dbReference type="PROSITE" id="PS01287">
    <property type="entry name" value="RTC"/>
    <property type="match status" value="1"/>
</dbReference>
<sequence>MEWVEIDGSYGEGGGQILRTAVALSVITGKPVRIHRIRANRPNPGLRPQHLHGILALKELSNARVKGAKVGSTVLEFVPGRAEPKHVKVPIKTAGSITLVLQALLPAMAFIGGSFEITGGTDVPWSPPVDYLRNVTLFALEKMGLRAEIELKRRGHYPKGGGLVTGSVEPWESKKPLVALEWNKVDSFAGISHATNLPAHVAERQAKSAEERLREFFNAPVEIETEVSRSLGPGSGIVVWAETDSLRLAGDALGKRGKPAEVVGREAAEELIEQLTPRKAVDRFLGDQLIPFLAFAGGEIGVAEITNHLVTNVWVVERFLGRTFEVEGEIGEPGVVRVVRKAEV</sequence>